<sequence>MVEKQVEVKLKTGLQARPAALFVQEANRFTSEIFIEKDGKKVNAKSIMGLMSLAIGSGSTITLITEGNDEQEAMEALIAFIEKE</sequence>
<feature type="chain" id="PRO_0000107898" description="HPr-like protein Crh">
    <location>
        <begin position="1"/>
        <end position="84"/>
    </location>
</feature>
<feature type="domain" description="HPr" evidence="2">
    <location>
        <begin position="1"/>
        <end position="84"/>
    </location>
</feature>
<feature type="modified residue" description="Phosphoserine; by HPrK/P" evidence="2">
    <location>
        <position position="46"/>
    </location>
</feature>
<protein>
    <recommendedName>
        <fullName>HPr-like protein Crh</fullName>
    </recommendedName>
    <alternativeName>
        <fullName>Catabolite repression HPr</fullName>
    </alternativeName>
</protein>
<organism>
    <name type="scientific">Halalkalibacterium halodurans (strain ATCC BAA-125 / DSM 18197 / FERM 7344 / JCM 9153 / C-125)</name>
    <name type="common">Bacillus halodurans</name>
    <dbReference type="NCBI Taxonomy" id="272558"/>
    <lineage>
        <taxon>Bacteria</taxon>
        <taxon>Bacillati</taxon>
        <taxon>Bacillota</taxon>
        <taxon>Bacilli</taxon>
        <taxon>Bacillales</taxon>
        <taxon>Bacillaceae</taxon>
        <taxon>Halalkalibacterium (ex Joshi et al. 2022)</taxon>
    </lineage>
</organism>
<keyword id="KW-0597">Phosphoprotein</keyword>
<keyword id="KW-1185">Reference proteome</keyword>
<comment type="function">
    <text evidence="1">Involved in carbon catabolite repression (CCR).</text>
</comment>
<comment type="similarity">
    <text evidence="3">Belongs to the HPr family.</text>
</comment>
<accession>Q9K708</accession>
<dbReference type="EMBL" id="BA000004">
    <property type="protein sequence ID" value="BAB07285.1"/>
    <property type="molecule type" value="Genomic_DNA"/>
</dbReference>
<dbReference type="PIR" id="F84095">
    <property type="entry name" value="F84095"/>
</dbReference>
<dbReference type="RefSeq" id="WP_010899694.1">
    <property type="nucleotide sequence ID" value="NC_002570.2"/>
</dbReference>
<dbReference type="SMR" id="Q9K708"/>
<dbReference type="STRING" id="272558.gene:10729479"/>
<dbReference type="KEGG" id="bha:BH3566"/>
<dbReference type="eggNOG" id="COG1925">
    <property type="taxonomic scope" value="Bacteria"/>
</dbReference>
<dbReference type="HOGENOM" id="CLU_136230_2_2_9"/>
<dbReference type="OrthoDB" id="9809047at2"/>
<dbReference type="Proteomes" id="UP000001258">
    <property type="component" value="Chromosome"/>
</dbReference>
<dbReference type="CDD" id="cd00367">
    <property type="entry name" value="PTS-HPr_like"/>
    <property type="match status" value="1"/>
</dbReference>
<dbReference type="Gene3D" id="3.30.1340.10">
    <property type="entry name" value="HPr-like"/>
    <property type="match status" value="1"/>
</dbReference>
<dbReference type="InterPro" id="IPR050399">
    <property type="entry name" value="HPr"/>
</dbReference>
<dbReference type="InterPro" id="IPR000032">
    <property type="entry name" value="HPr-like"/>
</dbReference>
<dbReference type="InterPro" id="IPR035895">
    <property type="entry name" value="HPr-like_sf"/>
</dbReference>
<dbReference type="InterPro" id="IPR002114">
    <property type="entry name" value="PTS_HPr_Ser_P_site"/>
</dbReference>
<dbReference type="NCBIfam" id="NF010354">
    <property type="entry name" value="PRK13782.1"/>
    <property type="match status" value="1"/>
</dbReference>
<dbReference type="NCBIfam" id="TIGR01003">
    <property type="entry name" value="PTS_HPr_family"/>
    <property type="match status" value="1"/>
</dbReference>
<dbReference type="PANTHER" id="PTHR33705:SF5">
    <property type="entry name" value="HPR-LIKE PROTEIN CRH"/>
    <property type="match status" value="1"/>
</dbReference>
<dbReference type="PANTHER" id="PTHR33705">
    <property type="entry name" value="PHOSPHOCARRIER PROTEIN HPR"/>
    <property type="match status" value="1"/>
</dbReference>
<dbReference type="Pfam" id="PF00381">
    <property type="entry name" value="PTS-HPr"/>
    <property type="match status" value="1"/>
</dbReference>
<dbReference type="PRINTS" id="PR00107">
    <property type="entry name" value="PHOSPHOCPHPR"/>
</dbReference>
<dbReference type="SUPFAM" id="SSF55594">
    <property type="entry name" value="HPr-like"/>
    <property type="match status" value="1"/>
</dbReference>
<dbReference type="PROSITE" id="PS51350">
    <property type="entry name" value="PTS_HPR_DOM"/>
    <property type="match status" value="1"/>
</dbReference>
<dbReference type="PROSITE" id="PS00589">
    <property type="entry name" value="PTS_HPR_SER"/>
    <property type="match status" value="1"/>
</dbReference>
<proteinExistence type="inferred from homology"/>
<gene>
    <name type="primary">crh</name>
    <name type="ordered locus">BH3566</name>
</gene>
<reference key="1">
    <citation type="journal article" date="2000" name="Nucleic Acids Res.">
        <title>Complete genome sequence of the alkaliphilic bacterium Bacillus halodurans and genomic sequence comparison with Bacillus subtilis.</title>
        <authorList>
            <person name="Takami H."/>
            <person name="Nakasone K."/>
            <person name="Takaki Y."/>
            <person name="Maeno G."/>
            <person name="Sasaki R."/>
            <person name="Masui N."/>
            <person name="Fuji F."/>
            <person name="Hirama C."/>
            <person name="Nakamura Y."/>
            <person name="Ogasawara N."/>
            <person name="Kuhara S."/>
            <person name="Horikoshi K."/>
        </authorList>
    </citation>
    <scope>NUCLEOTIDE SEQUENCE [LARGE SCALE GENOMIC DNA]</scope>
    <source>
        <strain>ATCC BAA-125 / DSM 18197 / FERM 7344 / JCM 9153 / C-125</strain>
    </source>
</reference>
<name>CRH_HALH5</name>
<evidence type="ECO:0000250" key="1"/>
<evidence type="ECO:0000255" key="2">
    <source>
        <dbReference type="PROSITE-ProRule" id="PRU00681"/>
    </source>
</evidence>
<evidence type="ECO:0000305" key="3"/>